<protein>
    <recommendedName>
        <fullName evidence="1">Orotidine 5'-phosphate decarboxylase</fullName>
        <ecNumber evidence="1">4.1.1.23</ecNumber>
    </recommendedName>
    <alternativeName>
        <fullName evidence="1">OMP decarboxylase</fullName>
        <shortName evidence="1">OMPDCase</shortName>
        <shortName evidence="1">OMPdecase</shortName>
    </alternativeName>
</protein>
<feature type="chain" id="PRO_0000134601" description="Orotidine 5'-phosphate decarboxylase">
    <location>
        <begin position="1"/>
        <end position="228"/>
    </location>
</feature>
<feature type="active site" description="Proton donor" evidence="1">
    <location>
        <position position="61"/>
    </location>
</feature>
<feature type="binding site" evidence="1">
    <location>
        <position position="8"/>
    </location>
    <ligand>
        <name>substrate</name>
    </ligand>
</feature>
<feature type="binding site" evidence="1">
    <location>
        <position position="30"/>
    </location>
    <ligand>
        <name>substrate</name>
    </ligand>
</feature>
<feature type="binding site" evidence="1">
    <location>
        <begin position="59"/>
        <end position="68"/>
    </location>
    <ligand>
        <name>substrate</name>
    </ligand>
</feature>
<feature type="binding site" evidence="1">
    <location>
        <position position="118"/>
    </location>
    <ligand>
        <name>substrate</name>
    </ligand>
</feature>
<feature type="binding site" evidence="1">
    <location>
        <position position="178"/>
    </location>
    <ligand>
        <name>substrate</name>
    </ligand>
</feature>
<feature type="binding site" evidence="1">
    <location>
        <position position="187"/>
    </location>
    <ligand>
        <name>substrate</name>
    </ligand>
</feature>
<feature type="binding site" evidence="1">
    <location>
        <position position="207"/>
    </location>
    <ligand>
        <name>substrate</name>
    </ligand>
</feature>
<feature type="binding site" evidence="1">
    <location>
        <position position="208"/>
    </location>
    <ligand>
        <name>substrate</name>
    </ligand>
</feature>
<organism>
    <name type="scientific">Wolinella succinogenes (strain ATCC 29543 / DSM 1740 / CCUG 13145 / JCM 31913 / LMG 7466 / NCTC 11488 / FDC 602W)</name>
    <name type="common">Vibrio succinogenes</name>
    <dbReference type="NCBI Taxonomy" id="273121"/>
    <lineage>
        <taxon>Bacteria</taxon>
        <taxon>Pseudomonadati</taxon>
        <taxon>Campylobacterota</taxon>
        <taxon>Epsilonproteobacteria</taxon>
        <taxon>Campylobacterales</taxon>
        <taxon>Helicobacteraceae</taxon>
        <taxon>Wolinella</taxon>
    </lineage>
</organism>
<reference key="1">
    <citation type="journal article" date="2003" name="Proc. Natl. Acad. Sci. U.S.A.">
        <title>Complete genome sequence and analysis of Wolinella succinogenes.</title>
        <authorList>
            <person name="Baar C."/>
            <person name="Eppinger M."/>
            <person name="Raddatz G."/>
            <person name="Simon J."/>
            <person name="Lanz C."/>
            <person name="Klimmek O."/>
            <person name="Nandakumar R."/>
            <person name="Gross R."/>
            <person name="Rosinus A."/>
            <person name="Keller H."/>
            <person name="Jagtap P."/>
            <person name="Linke B."/>
            <person name="Meyer F."/>
            <person name="Lederer H."/>
            <person name="Schuster S.C."/>
        </authorList>
    </citation>
    <scope>NUCLEOTIDE SEQUENCE [LARGE SCALE GENOMIC DNA]</scope>
    <source>
        <strain>ATCC 29543 / DSM 1740 / CCUG 13145 / JCM 31913 / LMG 7466 / NCTC 11488 / FDC 602W</strain>
    </source>
</reference>
<name>PYRF_WOLSU</name>
<proteinExistence type="inferred from homology"/>
<evidence type="ECO:0000255" key="1">
    <source>
        <dbReference type="HAMAP-Rule" id="MF_01200"/>
    </source>
</evidence>
<sequence>MQLCIALDLPSQEENLKLLESLVGLPVWIKVGLRSYIRDGKEFLGRIRQIDPRFELFLDLKLHDIPNTMGDAAEEIASLGVGMFTLHASSGGEAMREVAARLARFPRRPLAFAVTALTSFGEEGFREIYNASLESKALDMAMLAAQNGMDGVVCSVFESQRIKSYVAQDFLTLTPGIRPFGEPSGDQKRVADLHEAKSASSDFIVVGRPVYKHPRPREAVEKILEGIA</sequence>
<accession>Q7MAE8</accession>
<comment type="function">
    <text evidence="1">Catalyzes the decarboxylation of orotidine 5'-monophosphate (OMP) to uridine 5'-monophosphate (UMP).</text>
</comment>
<comment type="catalytic activity">
    <reaction evidence="1">
        <text>orotidine 5'-phosphate + H(+) = UMP + CO2</text>
        <dbReference type="Rhea" id="RHEA:11596"/>
        <dbReference type="ChEBI" id="CHEBI:15378"/>
        <dbReference type="ChEBI" id="CHEBI:16526"/>
        <dbReference type="ChEBI" id="CHEBI:57538"/>
        <dbReference type="ChEBI" id="CHEBI:57865"/>
        <dbReference type="EC" id="4.1.1.23"/>
    </reaction>
</comment>
<comment type="pathway">
    <text evidence="1">Pyrimidine metabolism; UMP biosynthesis via de novo pathway; UMP from orotate: step 2/2.</text>
</comment>
<comment type="subunit">
    <text evidence="1">Homodimer.</text>
</comment>
<comment type="similarity">
    <text evidence="1">Belongs to the OMP decarboxylase family. Type 1 subfamily.</text>
</comment>
<gene>
    <name evidence="1" type="primary">pyrF</name>
    <name type="ordered locus">WS0297</name>
</gene>
<dbReference type="EC" id="4.1.1.23" evidence="1"/>
<dbReference type="EMBL" id="BX571657">
    <property type="protein sequence ID" value="CAE09448.1"/>
    <property type="molecule type" value="Genomic_DNA"/>
</dbReference>
<dbReference type="RefSeq" id="WP_011138249.1">
    <property type="nucleotide sequence ID" value="NC_005090.1"/>
</dbReference>
<dbReference type="SMR" id="Q7MAE8"/>
<dbReference type="STRING" id="273121.WS0297"/>
<dbReference type="KEGG" id="wsu:WS0297"/>
<dbReference type="eggNOG" id="COG0284">
    <property type="taxonomic scope" value="Bacteria"/>
</dbReference>
<dbReference type="HOGENOM" id="CLU_067069_1_1_7"/>
<dbReference type="UniPathway" id="UPA00070">
    <property type="reaction ID" value="UER00120"/>
</dbReference>
<dbReference type="Proteomes" id="UP000000422">
    <property type="component" value="Chromosome"/>
</dbReference>
<dbReference type="GO" id="GO:0005829">
    <property type="term" value="C:cytosol"/>
    <property type="evidence" value="ECO:0007669"/>
    <property type="project" value="TreeGrafter"/>
</dbReference>
<dbReference type="GO" id="GO:0004590">
    <property type="term" value="F:orotidine-5'-phosphate decarboxylase activity"/>
    <property type="evidence" value="ECO:0007669"/>
    <property type="project" value="UniProtKB-UniRule"/>
</dbReference>
<dbReference type="GO" id="GO:0006207">
    <property type="term" value="P:'de novo' pyrimidine nucleobase biosynthetic process"/>
    <property type="evidence" value="ECO:0007669"/>
    <property type="project" value="InterPro"/>
</dbReference>
<dbReference type="GO" id="GO:0044205">
    <property type="term" value="P:'de novo' UMP biosynthetic process"/>
    <property type="evidence" value="ECO:0007669"/>
    <property type="project" value="UniProtKB-UniRule"/>
</dbReference>
<dbReference type="CDD" id="cd04725">
    <property type="entry name" value="OMP_decarboxylase_like"/>
    <property type="match status" value="1"/>
</dbReference>
<dbReference type="Gene3D" id="3.20.20.70">
    <property type="entry name" value="Aldolase class I"/>
    <property type="match status" value="1"/>
</dbReference>
<dbReference type="HAMAP" id="MF_01200_B">
    <property type="entry name" value="OMPdecase_type1_B"/>
    <property type="match status" value="1"/>
</dbReference>
<dbReference type="InterPro" id="IPR013785">
    <property type="entry name" value="Aldolase_TIM"/>
</dbReference>
<dbReference type="InterPro" id="IPR014732">
    <property type="entry name" value="OMPdecase"/>
</dbReference>
<dbReference type="InterPro" id="IPR018089">
    <property type="entry name" value="OMPdecase_AS"/>
</dbReference>
<dbReference type="InterPro" id="IPR047596">
    <property type="entry name" value="OMPdecase_bac"/>
</dbReference>
<dbReference type="InterPro" id="IPR001754">
    <property type="entry name" value="OMPdeCOase_dom"/>
</dbReference>
<dbReference type="InterPro" id="IPR011060">
    <property type="entry name" value="RibuloseP-bd_barrel"/>
</dbReference>
<dbReference type="NCBIfam" id="NF001273">
    <property type="entry name" value="PRK00230.1"/>
    <property type="match status" value="1"/>
</dbReference>
<dbReference type="NCBIfam" id="TIGR01740">
    <property type="entry name" value="pyrF"/>
    <property type="match status" value="1"/>
</dbReference>
<dbReference type="PANTHER" id="PTHR32119">
    <property type="entry name" value="OROTIDINE 5'-PHOSPHATE DECARBOXYLASE"/>
    <property type="match status" value="1"/>
</dbReference>
<dbReference type="PANTHER" id="PTHR32119:SF2">
    <property type="entry name" value="OROTIDINE 5'-PHOSPHATE DECARBOXYLASE"/>
    <property type="match status" value="1"/>
</dbReference>
<dbReference type="Pfam" id="PF00215">
    <property type="entry name" value="OMPdecase"/>
    <property type="match status" value="1"/>
</dbReference>
<dbReference type="SMART" id="SM00934">
    <property type="entry name" value="OMPdecase"/>
    <property type="match status" value="1"/>
</dbReference>
<dbReference type="SUPFAM" id="SSF51366">
    <property type="entry name" value="Ribulose-phoshate binding barrel"/>
    <property type="match status" value="1"/>
</dbReference>
<dbReference type="PROSITE" id="PS00156">
    <property type="entry name" value="OMPDECASE"/>
    <property type="match status" value="1"/>
</dbReference>
<keyword id="KW-0210">Decarboxylase</keyword>
<keyword id="KW-0456">Lyase</keyword>
<keyword id="KW-0665">Pyrimidine biosynthesis</keyword>
<keyword id="KW-1185">Reference proteome</keyword>